<proteinExistence type="inferred from homology"/>
<name>LPQI_MYCBP</name>
<reference key="1">
    <citation type="journal article" date="2007" name="Proc. Natl. Acad. Sci. U.S.A.">
        <title>Genome plasticity of BCG and impact on vaccine efficacy.</title>
        <authorList>
            <person name="Brosch R."/>
            <person name="Gordon S.V."/>
            <person name="Garnier T."/>
            <person name="Eiglmeier K."/>
            <person name="Frigui W."/>
            <person name="Valenti P."/>
            <person name="Dos Santos S."/>
            <person name="Duthoy S."/>
            <person name="Lacroix C."/>
            <person name="Garcia-Pelayo C."/>
            <person name="Inwald J.K."/>
            <person name="Golby P."/>
            <person name="Garcia J.N."/>
            <person name="Hewinson R.G."/>
            <person name="Behr M.A."/>
            <person name="Quail M.A."/>
            <person name="Churcher C."/>
            <person name="Barrell B.G."/>
            <person name="Parkhill J."/>
            <person name="Cole S.T."/>
        </authorList>
    </citation>
    <scope>NUCLEOTIDE SEQUENCE [LARGE SCALE GENOMIC DNA]</scope>
    <source>
        <strain>BCG / Pasteur 1173P2</strain>
    </source>
</reference>
<reference key="2">
    <citation type="journal article" date="2019" name="Nat. Commun.">
        <title>The hydrolase LpqI primes mycobacterial peptidoglycan recycling.</title>
        <authorList>
            <person name="Moynihan P.J."/>
            <person name="Cadby I.T."/>
            <person name="Veerapen N."/>
            <person name="Jankute M."/>
            <person name="Crosatti M."/>
            <person name="Mukamolova G.V."/>
            <person name="Lovering A.L."/>
            <person name="Besra G.S."/>
        </authorList>
    </citation>
    <scope>DISRUPTION PHENOTYPE</scope>
    <scope>PATHWAY</scope>
</reference>
<organism>
    <name type="scientific">Mycobacterium bovis (strain BCG / Pasteur 1173P2)</name>
    <dbReference type="NCBI Taxonomy" id="410289"/>
    <lineage>
        <taxon>Bacteria</taxon>
        <taxon>Bacillati</taxon>
        <taxon>Actinomycetota</taxon>
        <taxon>Actinomycetes</taxon>
        <taxon>Mycobacteriales</taxon>
        <taxon>Mycobacteriaceae</taxon>
        <taxon>Mycobacterium</taxon>
        <taxon>Mycobacterium tuberculosis complex</taxon>
    </lineage>
</organism>
<feature type="signal peptide" evidence="3">
    <location>
        <begin position="1"/>
        <end position="19"/>
    </location>
</feature>
<feature type="chain" id="PRO_5002615385" description="Beta-hexosaminidase LpqI" evidence="3">
    <location>
        <begin position="20"/>
        <end position="388"/>
    </location>
</feature>
<feature type="active site" description="Proton donor/acceptor" evidence="2">
    <location>
        <position position="236"/>
    </location>
</feature>
<feature type="active site" description="Nucleophile" evidence="2">
    <location>
        <position position="311"/>
    </location>
</feature>
<feature type="binding site" evidence="2">
    <location>
        <position position="123"/>
    </location>
    <ligand>
        <name>substrate</name>
    </ligand>
</feature>
<feature type="binding site" evidence="2">
    <location>
        <position position="131"/>
    </location>
    <ligand>
        <name>substrate</name>
    </ligand>
</feature>
<feature type="binding site" evidence="2">
    <location>
        <position position="193"/>
    </location>
    <ligand>
        <name>substrate</name>
    </ligand>
</feature>
<feature type="binding site" evidence="2">
    <location>
        <begin position="223"/>
        <end position="224"/>
    </location>
    <ligand>
        <name>substrate</name>
    </ligand>
</feature>
<feature type="site" description="Important for catalytic activity" evidence="2">
    <location>
        <position position="234"/>
    </location>
</feature>
<feature type="lipid moiety-binding region" description="N-palmitoyl cysteine" evidence="3">
    <location>
        <position position="20"/>
    </location>
</feature>
<feature type="lipid moiety-binding region" description="S-diacylglycerol cysteine" evidence="3">
    <location>
        <position position="20"/>
    </location>
</feature>
<accession>A0A0H3M1P5</accession>
<keyword id="KW-0997">Cell inner membrane</keyword>
<keyword id="KW-1003">Cell membrane</keyword>
<keyword id="KW-0326">Glycosidase</keyword>
<keyword id="KW-0378">Hydrolase</keyword>
<keyword id="KW-0449">Lipoprotein</keyword>
<keyword id="KW-0472">Membrane</keyword>
<keyword id="KW-0564">Palmitate</keyword>
<keyword id="KW-0732">Signal</keyword>
<gene>
    <name evidence="5" type="primary">lpqI</name>
    <name evidence="7" type="ordered locus">BCG_0275</name>
</gene>
<evidence type="ECO:0000250" key="1">
    <source>
        <dbReference type="UniProtKB" id="L7N6B0"/>
    </source>
</evidence>
<evidence type="ECO:0000250" key="2">
    <source>
        <dbReference type="UniProtKB" id="P40406"/>
    </source>
</evidence>
<evidence type="ECO:0000255" key="3">
    <source>
        <dbReference type="PROSITE-ProRule" id="PRU00303"/>
    </source>
</evidence>
<evidence type="ECO:0000269" key="4">
    <source>
    </source>
</evidence>
<evidence type="ECO:0000303" key="5">
    <source>
    </source>
</evidence>
<evidence type="ECO:0000305" key="6"/>
<evidence type="ECO:0000312" key="7">
    <source>
        <dbReference type="EMBL" id="CAL70259.1"/>
    </source>
</evidence>
<dbReference type="EC" id="3.2.1.52" evidence="1"/>
<dbReference type="EMBL" id="AM408590">
    <property type="protein sequence ID" value="CAL70259.1"/>
    <property type="molecule type" value="Genomic_DNA"/>
</dbReference>
<dbReference type="RefSeq" id="WP_010950367.1">
    <property type="nucleotide sequence ID" value="NC_008769.1"/>
</dbReference>
<dbReference type="SMR" id="A0A0H3M1P5"/>
<dbReference type="KEGG" id="mbb:BCG_0275"/>
<dbReference type="HOGENOM" id="CLU_008392_0_4_11"/>
<dbReference type="UniPathway" id="UPA00544"/>
<dbReference type="Proteomes" id="UP000001472">
    <property type="component" value="Chromosome"/>
</dbReference>
<dbReference type="GO" id="GO:0005886">
    <property type="term" value="C:plasma membrane"/>
    <property type="evidence" value="ECO:0007669"/>
    <property type="project" value="UniProtKB-SubCell"/>
</dbReference>
<dbReference type="GO" id="GO:0004563">
    <property type="term" value="F:beta-N-acetylhexosaminidase activity"/>
    <property type="evidence" value="ECO:0007669"/>
    <property type="project" value="UniProtKB-EC"/>
</dbReference>
<dbReference type="GO" id="GO:0005975">
    <property type="term" value="P:carbohydrate metabolic process"/>
    <property type="evidence" value="ECO:0007669"/>
    <property type="project" value="InterPro"/>
</dbReference>
<dbReference type="GO" id="GO:0009254">
    <property type="term" value="P:peptidoglycan turnover"/>
    <property type="evidence" value="ECO:0007669"/>
    <property type="project" value="UniProtKB-UniPathway"/>
</dbReference>
<dbReference type="Gene3D" id="3.20.20.300">
    <property type="entry name" value="Glycoside hydrolase, family 3, N-terminal domain"/>
    <property type="match status" value="1"/>
</dbReference>
<dbReference type="InterPro" id="IPR001764">
    <property type="entry name" value="Glyco_hydro_3_N"/>
</dbReference>
<dbReference type="InterPro" id="IPR036962">
    <property type="entry name" value="Glyco_hydro_3_N_sf"/>
</dbReference>
<dbReference type="InterPro" id="IPR017853">
    <property type="entry name" value="Glycoside_hydrolase_SF"/>
</dbReference>
<dbReference type="InterPro" id="IPR050226">
    <property type="entry name" value="NagZ_Beta-hexosaminidase"/>
</dbReference>
<dbReference type="PANTHER" id="PTHR30480:SF13">
    <property type="entry name" value="BETA-HEXOSAMINIDASE"/>
    <property type="match status" value="1"/>
</dbReference>
<dbReference type="PANTHER" id="PTHR30480">
    <property type="entry name" value="BETA-HEXOSAMINIDASE-RELATED"/>
    <property type="match status" value="1"/>
</dbReference>
<dbReference type="Pfam" id="PF00933">
    <property type="entry name" value="Glyco_hydro_3"/>
    <property type="match status" value="1"/>
</dbReference>
<dbReference type="SUPFAM" id="SSF51445">
    <property type="entry name" value="(Trans)glycosidases"/>
    <property type="match status" value="1"/>
</dbReference>
<dbReference type="PROSITE" id="PS51257">
    <property type="entry name" value="PROKAR_LIPOPROTEIN"/>
    <property type="match status" value="1"/>
</dbReference>
<comment type="function">
    <text evidence="1">Plays a role in peptidoglycan recycling by cleaving the terminal beta-1,4-linked N-acetylglucosamine (GlcNAc) from peptidoglycan fragments. Acts as a regulator for GlcNAc-MurNAc levels by cleaving disaccharides and allowing the breakdown of MurNAc.</text>
</comment>
<comment type="catalytic activity">
    <reaction evidence="1">
        <text>Hydrolysis of terminal non-reducing N-acetyl-D-hexosamine residues in N-acetyl-beta-D-hexosaminides.</text>
        <dbReference type="EC" id="3.2.1.52"/>
    </reaction>
</comment>
<comment type="pathway">
    <text evidence="4">Cell wall biogenesis; peptidoglycan recycling.</text>
</comment>
<comment type="subcellular location">
    <subcellularLocation>
        <location evidence="1">Cell inner membrane</location>
        <topology evidence="3">Lipid-anchor</topology>
        <orientation evidence="1">Periplasmic side</orientation>
    </subcellularLocation>
</comment>
<comment type="disruption phenotype">
    <text evidence="4">Deletion mutant is devoid of beta-N-acetylglucosaminidase activity and shows increased antibiotic and lysozyme resistance. Mutant is unable to grow on soluble peptidoglycan as a sole carbon source.</text>
</comment>
<comment type="similarity">
    <text evidence="6">Belongs to the glycosyl hydrolase 3 family.</text>
</comment>
<protein>
    <recommendedName>
        <fullName evidence="6">Beta-hexosaminidase LpqI</fullName>
        <ecNumber evidence="1">3.2.1.52</ecNumber>
    </recommendedName>
    <alternativeName>
        <fullName evidence="5">Beta-N-acetylglucosaminidase</fullName>
    </alternativeName>
    <alternativeName>
        <fullName evidence="6">Beta-N-acetylhexosaminidase</fullName>
    </alternativeName>
</protein>
<sequence length="388" mass="39533">MAFPRTLAILAAAAALVVACSHGGTPTGSSTTSGASPATPVAVPVPRSCAEPAGIPALLSPRDKLAQLLVVGVRDAADAQAVVTNYHVGGILIGSDTDLTIFDGALAEIVAGGGPLPLAVSVDEEGGRLSRLRSLIGGTGPSARELAQTRTVQQVRDLARDRGRQMRKLGITIDFAPVVDVTDAPDDTVIGDRSFGSDPATVTAYAGAYAQGLRDAGVLPVLKHFPGHGRGSGDSHNGGVTTPPLDDLVGDDLVPYRTLVTQAPVGVMVGHLQVPGLTGSEPASLSKAAVNLLRTGTGYGAPPFDGPVFSDDLSGMAAISDRFGVSEAVLRTLQAGADIALWVTTKEVPAVLDRLEQALRAGELPMSAVDRSVVRVATMKGPNPGCGR</sequence>